<keyword id="KW-0963">Cytoplasm</keyword>
<keyword id="KW-0251">Elongation factor</keyword>
<keyword id="KW-0342">GTP-binding</keyword>
<keyword id="KW-0378">Hydrolase</keyword>
<keyword id="KW-0460">Magnesium</keyword>
<keyword id="KW-0479">Metal-binding</keyword>
<keyword id="KW-0547">Nucleotide-binding</keyword>
<keyword id="KW-0648">Protein biosynthesis</keyword>
<keyword id="KW-1185">Reference proteome</keyword>
<proteinExistence type="inferred from homology"/>
<comment type="function">
    <text evidence="2">GTP hydrolase that promotes the GTP-dependent binding of aminoacyl-tRNA to the A-site of ribosomes during protein biosynthesis.</text>
</comment>
<comment type="catalytic activity">
    <reaction evidence="2">
        <text>GTP + H2O = GDP + phosphate + H(+)</text>
        <dbReference type="Rhea" id="RHEA:19669"/>
        <dbReference type="ChEBI" id="CHEBI:15377"/>
        <dbReference type="ChEBI" id="CHEBI:15378"/>
        <dbReference type="ChEBI" id="CHEBI:37565"/>
        <dbReference type="ChEBI" id="CHEBI:43474"/>
        <dbReference type="ChEBI" id="CHEBI:58189"/>
        <dbReference type="EC" id="3.6.5.3"/>
    </reaction>
    <physiologicalReaction direction="left-to-right" evidence="2">
        <dbReference type="Rhea" id="RHEA:19670"/>
    </physiologicalReaction>
</comment>
<comment type="subunit">
    <text evidence="2">Monomer.</text>
</comment>
<comment type="subcellular location">
    <subcellularLocation>
        <location evidence="2">Cytoplasm</location>
    </subcellularLocation>
</comment>
<comment type="similarity">
    <text evidence="2">Belongs to the TRAFAC class translation factor GTPase superfamily. Classic translation factor GTPase family. EF-Tu/EF-1A subfamily.</text>
</comment>
<accession>Q2IXR2</accession>
<sequence length="396" mass="43330">MAKAKFERTKPHCNIGTIGHVDHGKTSLTAAITKVLAETGGATFTAYDQIDKAPEEKARGITISTAHVEYETTNRHYAHVDCPGHADYVKNMITGAAQMDGGILVVSAADGPMPQTREHILLARQVGVPALVVFLNKCDMVDDPELLELVEMEVRELLSKYDFPGDDIPIIKGSALAALENSDQKLGHDAILELMKAVDAYIPQPERPIDQPFLMPVEDVFSISGRGTVVTGRVERGIVKVGEEIEIVGIRDTQKTTCTGVEMFRKLLDQGQAGDNIGCLLRGTKREDVERGQVLCKPGSVKPHTKFKAEAYILTKEEGGRHTPFFTNYRPQFYFRTTDVTGVVHLPEGTEMVMPGDNIAMEVHLIVPIAMEEKLRFAIREGGRTVGAGVVASIIE</sequence>
<organism>
    <name type="scientific">Rhodopseudomonas palustris (strain HaA2)</name>
    <dbReference type="NCBI Taxonomy" id="316058"/>
    <lineage>
        <taxon>Bacteria</taxon>
        <taxon>Pseudomonadati</taxon>
        <taxon>Pseudomonadota</taxon>
        <taxon>Alphaproteobacteria</taxon>
        <taxon>Hyphomicrobiales</taxon>
        <taxon>Nitrobacteraceae</taxon>
        <taxon>Rhodopseudomonas</taxon>
    </lineage>
</organism>
<protein>
    <recommendedName>
        <fullName evidence="2">Elongation factor Tu</fullName>
        <shortName evidence="2">EF-Tu</shortName>
        <ecNumber evidence="2">3.6.5.3</ecNumber>
    </recommendedName>
</protein>
<dbReference type="EC" id="3.6.5.3" evidence="2"/>
<dbReference type="EMBL" id="CP000250">
    <property type="protein sequence ID" value="ABD06971.1"/>
    <property type="molecule type" value="Genomic_DNA"/>
</dbReference>
<dbReference type="EMBL" id="CP000250">
    <property type="protein sequence ID" value="ABD06998.1"/>
    <property type="molecule type" value="Genomic_DNA"/>
</dbReference>
<dbReference type="RefSeq" id="WP_011441158.1">
    <property type="nucleotide sequence ID" value="NC_007778.1"/>
</dbReference>
<dbReference type="SMR" id="Q2IXR2"/>
<dbReference type="STRING" id="316058.RPB_2266"/>
<dbReference type="KEGG" id="rpb:RPB_2266"/>
<dbReference type="KEGG" id="rpb:RPB_2293"/>
<dbReference type="eggNOG" id="COG0050">
    <property type="taxonomic scope" value="Bacteria"/>
</dbReference>
<dbReference type="HOGENOM" id="CLU_007265_0_1_5"/>
<dbReference type="OrthoDB" id="9803139at2"/>
<dbReference type="Proteomes" id="UP000008809">
    <property type="component" value="Chromosome"/>
</dbReference>
<dbReference type="GO" id="GO:0005829">
    <property type="term" value="C:cytosol"/>
    <property type="evidence" value="ECO:0007669"/>
    <property type="project" value="TreeGrafter"/>
</dbReference>
<dbReference type="GO" id="GO:0005525">
    <property type="term" value="F:GTP binding"/>
    <property type="evidence" value="ECO:0007669"/>
    <property type="project" value="UniProtKB-UniRule"/>
</dbReference>
<dbReference type="GO" id="GO:0003924">
    <property type="term" value="F:GTPase activity"/>
    <property type="evidence" value="ECO:0007669"/>
    <property type="project" value="InterPro"/>
</dbReference>
<dbReference type="GO" id="GO:0097216">
    <property type="term" value="F:guanosine tetraphosphate binding"/>
    <property type="evidence" value="ECO:0007669"/>
    <property type="project" value="UniProtKB-ARBA"/>
</dbReference>
<dbReference type="GO" id="GO:0003746">
    <property type="term" value="F:translation elongation factor activity"/>
    <property type="evidence" value="ECO:0007669"/>
    <property type="project" value="UniProtKB-UniRule"/>
</dbReference>
<dbReference type="CDD" id="cd01884">
    <property type="entry name" value="EF_Tu"/>
    <property type="match status" value="1"/>
</dbReference>
<dbReference type="CDD" id="cd03697">
    <property type="entry name" value="EFTU_II"/>
    <property type="match status" value="1"/>
</dbReference>
<dbReference type="CDD" id="cd03707">
    <property type="entry name" value="EFTU_III"/>
    <property type="match status" value="1"/>
</dbReference>
<dbReference type="FunFam" id="2.40.30.10:FF:000001">
    <property type="entry name" value="Elongation factor Tu"/>
    <property type="match status" value="1"/>
</dbReference>
<dbReference type="FunFam" id="3.40.50.300:FF:000003">
    <property type="entry name" value="Elongation factor Tu"/>
    <property type="match status" value="1"/>
</dbReference>
<dbReference type="Gene3D" id="3.40.50.300">
    <property type="entry name" value="P-loop containing nucleotide triphosphate hydrolases"/>
    <property type="match status" value="1"/>
</dbReference>
<dbReference type="Gene3D" id="2.40.30.10">
    <property type="entry name" value="Translation factors"/>
    <property type="match status" value="2"/>
</dbReference>
<dbReference type="HAMAP" id="MF_00118_B">
    <property type="entry name" value="EF_Tu_B"/>
    <property type="match status" value="1"/>
</dbReference>
<dbReference type="InterPro" id="IPR041709">
    <property type="entry name" value="EF-Tu_GTP-bd"/>
</dbReference>
<dbReference type="InterPro" id="IPR050055">
    <property type="entry name" value="EF-Tu_GTPase"/>
</dbReference>
<dbReference type="InterPro" id="IPR004161">
    <property type="entry name" value="EFTu-like_2"/>
</dbReference>
<dbReference type="InterPro" id="IPR033720">
    <property type="entry name" value="EFTU_2"/>
</dbReference>
<dbReference type="InterPro" id="IPR031157">
    <property type="entry name" value="G_TR_CS"/>
</dbReference>
<dbReference type="InterPro" id="IPR027417">
    <property type="entry name" value="P-loop_NTPase"/>
</dbReference>
<dbReference type="InterPro" id="IPR005225">
    <property type="entry name" value="Small_GTP-bd"/>
</dbReference>
<dbReference type="InterPro" id="IPR000795">
    <property type="entry name" value="T_Tr_GTP-bd_dom"/>
</dbReference>
<dbReference type="InterPro" id="IPR009000">
    <property type="entry name" value="Transl_B-barrel_sf"/>
</dbReference>
<dbReference type="InterPro" id="IPR009001">
    <property type="entry name" value="Transl_elong_EF1A/Init_IF2_C"/>
</dbReference>
<dbReference type="InterPro" id="IPR004541">
    <property type="entry name" value="Transl_elong_EFTu/EF1A_bac/org"/>
</dbReference>
<dbReference type="InterPro" id="IPR004160">
    <property type="entry name" value="Transl_elong_EFTu/EF1A_C"/>
</dbReference>
<dbReference type="NCBIfam" id="TIGR00485">
    <property type="entry name" value="EF-Tu"/>
    <property type="match status" value="1"/>
</dbReference>
<dbReference type="NCBIfam" id="NF000766">
    <property type="entry name" value="PRK00049.1"/>
    <property type="match status" value="1"/>
</dbReference>
<dbReference type="NCBIfam" id="NF009372">
    <property type="entry name" value="PRK12735.1"/>
    <property type="match status" value="1"/>
</dbReference>
<dbReference type="NCBIfam" id="NF009373">
    <property type="entry name" value="PRK12736.1"/>
    <property type="match status" value="1"/>
</dbReference>
<dbReference type="NCBIfam" id="TIGR00231">
    <property type="entry name" value="small_GTP"/>
    <property type="match status" value="1"/>
</dbReference>
<dbReference type="PANTHER" id="PTHR43721:SF22">
    <property type="entry name" value="ELONGATION FACTOR TU, MITOCHONDRIAL"/>
    <property type="match status" value="1"/>
</dbReference>
<dbReference type="PANTHER" id="PTHR43721">
    <property type="entry name" value="ELONGATION FACTOR TU-RELATED"/>
    <property type="match status" value="1"/>
</dbReference>
<dbReference type="Pfam" id="PF00009">
    <property type="entry name" value="GTP_EFTU"/>
    <property type="match status" value="1"/>
</dbReference>
<dbReference type="Pfam" id="PF03144">
    <property type="entry name" value="GTP_EFTU_D2"/>
    <property type="match status" value="1"/>
</dbReference>
<dbReference type="Pfam" id="PF03143">
    <property type="entry name" value="GTP_EFTU_D3"/>
    <property type="match status" value="1"/>
</dbReference>
<dbReference type="PRINTS" id="PR00315">
    <property type="entry name" value="ELONGATNFCT"/>
</dbReference>
<dbReference type="SUPFAM" id="SSF50465">
    <property type="entry name" value="EF-Tu/eEF-1alpha/eIF2-gamma C-terminal domain"/>
    <property type="match status" value="1"/>
</dbReference>
<dbReference type="SUPFAM" id="SSF52540">
    <property type="entry name" value="P-loop containing nucleoside triphosphate hydrolases"/>
    <property type="match status" value="1"/>
</dbReference>
<dbReference type="SUPFAM" id="SSF50447">
    <property type="entry name" value="Translation proteins"/>
    <property type="match status" value="1"/>
</dbReference>
<dbReference type="PROSITE" id="PS00301">
    <property type="entry name" value="G_TR_1"/>
    <property type="match status" value="1"/>
</dbReference>
<dbReference type="PROSITE" id="PS51722">
    <property type="entry name" value="G_TR_2"/>
    <property type="match status" value="1"/>
</dbReference>
<evidence type="ECO:0000250" key="1"/>
<evidence type="ECO:0000255" key="2">
    <source>
        <dbReference type="HAMAP-Rule" id="MF_00118"/>
    </source>
</evidence>
<gene>
    <name evidence="2" type="primary">tuf1</name>
    <name type="ordered locus">RPB_2266</name>
</gene>
<gene>
    <name evidence="2" type="primary">tuf2</name>
    <name type="ordered locus">RPB_2293</name>
</gene>
<name>EFTU_RHOP2</name>
<feature type="chain" id="PRO_0000337498" description="Elongation factor Tu">
    <location>
        <begin position="1"/>
        <end position="396"/>
    </location>
</feature>
<feature type="domain" description="tr-type G">
    <location>
        <begin position="10"/>
        <end position="206"/>
    </location>
</feature>
<feature type="region of interest" description="G1" evidence="1">
    <location>
        <begin position="19"/>
        <end position="26"/>
    </location>
</feature>
<feature type="region of interest" description="G2" evidence="1">
    <location>
        <begin position="60"/>
        <end position="64"/>
    </location>
</feature>
<feature type="region of interest" description="G3" evidence="1">
    <location>
        <begin position="81"/>
        <end position="84"/>
    </location>
</feature>
<feature type="region of interest" description="G4" evidence="1">
    <location>
        <begin position="136"/>
        <end position="139"/>
    </location>
</feature>
<feature type="region of interest" description="G5" evidence="1">
    <location>
        <begin position="174"/>
        <end position="176"/>
    </location>
</feature>
<feature type="binding site" evidence="2">
    <location>
        <begin position="19"/>
        <end position="26"/>
    </location>
    <ligand>
        <name>GTP</name>
        <dbReference type="ChEBI" id="CHEBI:37565"/>
    </ligand>
</feature>
<feature type="binding site" evidence="2">
    <location>
        <position position="26"/>
    </location>
    <ligand>
        <name>Mg(2+)</name>
        <dbReference type="ChEBI" id="CHEBI:18420"/>
    </ligand>
</feature>
<feature type="binding site" evidence="2">
    <location>
        <begin position="81"/>
        <end position="85"/>
    </location>
    <ligand>
        <name>GTP</name>
        <dbReference type="ChEBI" id="CHEBI:37565"/>
    </ligand>
</feature>
<feature type="binding site" evidence="2">
    <location>
        <begin position="136"/>
        <end position="139"/>
    </location>
    <ligand>
        <name>GTP</name>
        <dbReference type="ChEBI" id="CHEBI:37565"/>
    </ligand>
</feature>
<reference key="1">
    <citation type="submission" date="2006-01" db="EMBL/GenBank/DDBJ databases">
        <title>Complete sequence of Rhodopseudomonas palustris HaA2.</title>
        <authorList>
            <consortium name="US DOE Joint Genome Institute"/>
            <person name="Copeland A."/>
            <person name="Lucas S."/>
            <person name="Lapidus A."/>
            <person name="Barry K."/>
            <person name="Detter J.C."/>
            <person name="Glavina T."/>
            <person name="Hammon N."/>
            <person name="Israni S."/>
            <person name="Pitluck S."/>
            <person name="Chain P."/>
            <person name="Malfatti S."/>
            <person name="Shin M."/>
            <person name="Vergez L."/>
            <person name="Schmutz J."/>
            <person name="Larimer F."/>
            <person name="Land M."/>
            <person name="Hauser L."/>
            <person name="Pelletier D.A."/>
            <person name="Kyrpides N."/>
            <person name="Anderson I."/>
            <person name="Oda Y."/>
            <person name="Harwood C.S."/>
            <person name="Richardson P."/>
        </authorList>
    </citation>
    <scope>NUCLEOTIDE SEQUENCE [LARGE SCALE GENOMIC DNA]</scope>
    <source>
        <strain>HaA2</strain>
    </source>
</reference>